<name>PSD_CHRVO</name>
<dbReference type="EC" id="4.1.1.65" evidence="1"/>
<dbReference type="EMBL" id="AE016825">
    <property type="protein sequence ID" value="AAQ58267.1"/>
    <property type="molecule type" value="Genomic_DNA"/>
</dbReference>
<dbReference type="RefSeq" id="WP_011134146.1">
    <property type="nucleotide sequence ID" value="NC_005085.1"/>
</dbReference>
<dbReference type="SMR" id="Q7P0H6"/>
<dbReference type="STRING" id="243365.CV_0591"/>
<dbReference type="KEGG" id="cvi:CV_0591"/>
<dbReference type="eggNOG" id="COG0688">
    <property type="taxonomic scope" value="Bacteria"/>
</dbReference>
<dbReference type="HOGENOM" id="CLU_029061_4_0_4"/>
<dbReference type="OrthoDB" id="9802030at2"/>
<dbReference type="UniPathway" id="UPA00558">
    <property type="reaction ID" value="UER00616"/>
</dbReference>
<dbReference type="Proteomes" id="UP000001424">
    <property type="component" value="Chromosome"/>
</dbReference>
<dbReference type="GO" id="GO:0005886">
    <property type="term" value="C:plasma membrane"/>
    <property type="evidence" value="ECO:0007669"/>
    <property type="project" value="UniProtKB-SubCell"/>
</dbReference>
<dbReference type="GO" id="GO:0004609">
    <property type="term" value="F:phosphatidylserine decarboxylase activity"/>
    <property type="evidence" value="ECO:0007669"/>
    <property type="project" value="UniProtKB-UniRule"/>
</dbReference>
<dbReference type="GO" id="GO:0006646">
    <property type="term" value="P:phosphatidylethanolamine biosynthetic process"/>
    <property type="evidence" value="ECO:0007669"/>
    <property type="project" value="UniProtKB-UniRule"/>
</dbReference>
<dbReference type="HAMAP" id="MF_00662">
    <property type="entry name" value="PS_decarb_PSD_B_type1"/>
    <property type="match status" value="1"/>
</dbReference>
<dbReference type="InterPro" id="IPR003817">
    <property type="entry name" value="PS_Dcarbxylase"/>
</dbReference>
<dbReference type="InterPro" id="IPR033177">
    <property type="entry name" value="PSD-B"/>
</dbReference>
<dbReference type="InterPro" id="IPR033178">
    <property type="entry name" value="PSD_type1_pro"/>
</dbReference>
<dbReference type="NCBIfam" id="TIGR00163">
    <property type="entry name" value="PS_decarb"/>
    <property type="match status" value="1"/>
</dbReference>
<dbReference type="PANTHER" id="PTHR10067">
    <property type="entry name" value="PHOSPHATIDYLSERINE DECARBOXYLASE"/>
    <property type="match status" value="1"/>
</dbReference>
<dbReference type="PANTHER" id="PTHR10067:SF6">
    <property type="entry name" value="PHOSPHATIDYLSERINE DECARBOXYLASE PROENZYME, MITOCHONDRIAL"/>
    <property type="match status" value="1"/>
</dbReference>
<dbReference type="Pfam" id="PF02666">
    <property type="entry name" value="PS_Dcarbxylase"/>
    <property type="match status" value="1"/>
</dbReference>
<sequence length="280" mass="30635">MSERLFVLSQHILPKLALTRLAGRFADWKGGGITTAAIRRFIARYNVDMGEAADSDPAAYATFNDFFTRALKPGVRPVADARLVCPVDGAVSQLGAIDSGRIFQAKGRDYSATALLAGDADLAARFADGHFATIYLSPRDYHRIHMPCAGRLLEMTYVPGDLYSVNPATARGVDRLFARNERVVCVFEDEQSQPFVMVLVGATIVGSMATVWHGVVNPPRRPAVEKWDYRGQDIRLAKGEEMGRFLLGSTVVLLYPAGPLKFNPQWQAASPVRMGEAMAS</sequence>
<comment type="function">
    <text evidence="1">Catalyzes the formation of phosphatidylethanolamine (PtdEtn) from phosphatidylserine (PtdSer).</text>
</comment>
<comment type="catalytic activity">
    <reaction evidence="1">
        <text>a 1,2-diacyl-sn-glycero-3-phospho-L-serine + H(+) = a 1,2-diacyl-sn-glycero-3-phosphoethanolamine + CO2</text>
        <dbReference type="Rhea" id="RHEA:20828"/>
        <dbReference type="ChEBI" id="CHEBI:15378"/>
        <dbReference type="ChEBI" id="CHEBI:16526"/>
        <dbReference type="ChEBI" id="CHEBI:57262"/>
        <dbReference type="ChEBI" id="CHEBI:64612"/>
        <dbReference type="EC" id="4.1.1.65"/>
    </reaction>
</comment>
<comment type="cofactor">
    <cofactor evidence="1">
        <name>pyruvate</name>
        <dbReference type="ChEBI" id="CHEBI:15361"/>
    </cofactor>
    <text evidence="1">Binds 1 pyruvoyl group covalently per subunit.</text>
</comment>
<comment type="pathway">
    <text evidence="1">Phospholipid metabolism; phosphatidylethanolamine biosynthesis; phosphatidylethanolamine from CDP-diacylglycerol: step 2/2.</text>
</comment>
<comment type="subunit">
    <text evidence="1">Heterodimer of a large membrane-associated beta subunit and a small pyruvoyl-containing alpha subunit.</text>
</comment>
<comment type="subcellular location">
    <subcellularLocation>
        <location evidence="1">Cell membrane</location>
        <topology evidence="1">Peripheral membrane protein</topology>
    </subcellularLocation>
</comment>
<comment type="PTM">
    <text evidence="1">Is synthesized initially as an inactive proenzyme. Formation of the active enzyme involves a self-maturation process in which the active site pyruvoyl group is generated from an internal serine residue via an autocatalytic post-translational modification. Two non-identical subunits are generated from the proenzyme in this reaction, and the pyruvate is formed at the N-terminus of the alpha chain, which is derived from the carboxyl end of the proenzyme. The autoendoproteolytic cleavage occurs by a canonical serine protease mechanism, in which the side chain hydroxyl group of the serine supplies its oxygen atom to form the C-terminus of the beta chain, while the remainder of the serine residue undergoes an oxidative deamination to produce ammonia and the pyruvoyl prosthetic group on the alpha chain. During this reaction, the Ser that is part of the protease active site of the proenzyme becomes the pyruvoyl prosthetic group, which constitutes an essential element of the active site of the mature decarboxylase.</text>
</comment>
<comment type="similarity">
    <text evidence="1">Belongs to the phosphatidylserine decarboxylase family. PSD-B subfamily. Prokaryotic type I sub-subfamily.</text>
</comment>
<organism>
    <name type="scientific">Chromobacterium violaceum (strain ATCC 12472 / DSM 30191 / JCM 1249 / CCUG 213 / NBRC 12614 / NCIMB 9131 / NCTC 9757 / MK)</name>
    <dbReference type="NCBI Taxonomy" id="243365"/>
    <lineage>
        <taxon>Bacteria</taxon>
        <taxon>Pseudomonadati</taxon>
        <taxon>Pseudomonadota</taxon>
        <taxon>Betaproteobacteria</taxon>
        <taxon>Neisseriales</taxon>
        <taxon>Chromobacteriaceae</taxon>
        <taxon>Chromobacterium</taxon>
    </lineage>
</organism>
<protein>
    <recommendedName>
        <fullName evidence="1">Phosphatidylserine decarboxylase proenzyme</fullName>
        <ecNumber evidence="1">4.1.1.65</ecNumber>
    </recommendedName>
    <component>
        <recommendedName>
            <fullName evidence="1">Phosphatidylserine decarboxylase alpha chain</fullName>
        </recommendedName>
    </component>
    <component>
        <recommendedName>
            <fullName evidence="1">Phosphatidylserine decarboxylase beta chain</fullName>
        </recommendedName>
    </component>
</protein>
<proteinExistence type="inferred from homology"/>
<feature type="chain" id="PRO_0000029643" description="Phosphatidylserine decarboxylase beta chain" evidence="1">
    <location>
        <begin position="1"/>
        <end position="248"/>
    </location>
</feature>
<feature type="chain" id="PRO_0000029644" description="Phosphatidylserine decarboxylase alpha chain" evidence="1">
    <location>
        <begin position="249"/>
        <end position="280"/>
    </location>
</feature>
<feature type="active site" description="Charge relay system; for autoendoproteolytic cleavage activity" evidence="1">
    <location>
        <position position="88"/>
    </location>
</feature>
<feature type="active site" description="Charge relay system; for autoendoproteolytic cleavage activity" evidence="1">
    <location>
        <position position="145"/>
    </location>
</feature>
<feature type="active site" description="Charge relay system; for autoendoproteolytic cleavage activity" evidence="1">
    <location>
        <position position="249"/>
    </location>
</feature>
<feature type="active site" description="Schiff-base intermediate with substrate; via pyruvic acid; for decarboxylase activity" evidence="1">
    <location>
        <position position="249"/>
    </location>
</feature>
<feature type="site" description="Cleavage (non-hydrolytic); by autocatalysis" evidence="1">
    <location>
        <begin position="248"/>
        <end position="249"/>
    </location>
</feature>
<feature type="modified residue" description="Pyruvic acid (Ser); by autocatalysis" evidence="1">
    <location>
        <position position="249"/>
    </location>
</feature>
<evidence type="ECO:0000255" key="1">
    <source>
        <dbReference type="HAMAP-Rule" id="MF_00662"/>
    </source>
</evidence>
<gene>
    <name evidence="1" type="primary">psd</name>
    <name type="ordered locus">CV_0591</name>
</gene>
<reference key="1">
    <citation type="journal article" date="2003" name="Proc. Natl. Acad. Sci. U.S.A.">
        <title>The complete genome sequence of Chromobacterium violaceum reveals remarkable and exploitable bacterial adaptability.</title>
        <authorList>
            <person name="Vasconcelos A.T.R."/>
            <person name="de Almeida D.F."/>
            <person name="Hungria M."/>
            <person name="Guimaraes C.T."/>
            <person name="Antonio R.V."/>
            <person name="Almeida F.C."/>
            <person name="de Almeida L.G.P."/>
            <person name="de Almeida R."/>
            <person name="Alves-Gomes J.A."/>
            <person name="Andrade E.M."/>
            <person name="Araripe J."/>
            <person name="de Araujo M.F.F."/>
            <person name="Astolfi-Filho S."/>
            <person name="Azevedo V."/>
            <person name="Baptista A.J."/>
            <person name="Bataus L.A.M."/>
            <person name="Batista J.S."/>
            <person name="Belo A."/>
            <person name="van den Berg C."/>
            <person name="Bogo M."/>
            <person name="Bonatto S."/>
            <person name="Bordignon J."/>
            <person name="Brigido M.M."/>
            <person name="Brito C.A."/>
            <person name="Brocchi M."/>
            <person name="Burity H.A."/>
            <person name="Camargo A.A."/>
            <person name="Cardoso D.D.P."/>
            <person name="Carneiro N.P."/>
            <person name="Carraro D.M."/>
            <person name="Carvalho C.M.B."/>
            <person name="Cascardo J.C.M."/>
            <person name="Cavada B.S."/>
            <person name="Chueire L.M.O."/>
            <person name="Creczynski-Pasa T.B."/>
            <person name="Cunha-Junior N.C."/>
            <person name="Fagundes N."/>
            <person name="Falcao C.L."/>
            <person name="Fantinatti F."/>
            <person name="Farias I.P."/>
            <person name="Felipe M.S.S."/>
            <person name="Ferrari L.P."/>
            <person name="Ferro J.A."/>
            <person name="Ferro M.I.T."/>
            <person name="Franco G.R."/>
            <person name="Freitas N.S.A."/>
            <person name="Furlan L.R."/>
            <person name="Gazzinelli R.T."/>
            <person name="Gomes E.A."/>
            <person name="Goncalves P.R."/>
            <person name="Grangeiro T.B."/>
            <person name="Grattapaglia D."/>
            <person name="Grisard E.C."/>
            <person name="Hanna E.S."/>
            <person name="Jardim S.N."/>
            <person name="Laurino J."/>
            <person name="Leoi L.C.T."/>
            <person name="Lima L.F.A."/>
            <person name="Loureiro M.F."/>
            <person name="Lyra M.C.C.P."/>
            <person name="Madeira H.M.F."/>
            <person name="Manfio G.P."/>
            <person name="Maranhao A.Q."/>
            <person name="Martins W.S."/>
            <person name="di Mauro S.M.Z."/>
            <person name="de Medeiros S.R.B."/>
            <person name="Meissner R.V."/>
            <person name="Moreira M.A.M."/>
            <person name="Nascimento F.F."/>
            <person name="Nicolas M.F."/>
            <person name="Oliveira J.G."/>
            <person name="Oliveira S.C."/>
            <person name="Paixao R.F.C."/>
            <person name="Parente J.A."/>
            <person name="Pedrosa F.O."/>
            <person name="Pena S.D.J."/>
            <person name="Pereira J.O."/>
            <person name="Pereira M."/>
            <person name="Pinto L.S.R.C."/>
            <person name="Pinto L.S."/>
            <person name="Porto J.I.R."/>
            <person name="Potrich D.P."/>
            <person name="Ramalho-Neto C.E."/>
            <person name="Reis A.M.M."/>
            <person name="Rigo L.U."/>
            <person name="Rondinelli E."/>
            <person name="Santos E.B.P."/>
            <person name="Santos F.R."/>
            <person name="Schneider M.P.C."/>
            <person name="Seuanez H.N."/>
            <person name="Silva A.M.R."/>
            <person name="da Silva A.L.C."/>
            <person name="Silva D.W."/>
            <person name="Silva R."/>
            <person name="Simoes I.C."/>
            <person name="Simon D."/>
            <person name="Soares C.M.A."/>
            <person name="Soares R.B.A."/>
            <person name="Souza E.M."/>
            <person name="Souza K.R.L."/>
            <person name="Souza R.C."/>
            <person name="Steffens M.B.R."/>
            <person name="Steindel M."/>
            <person name="Teixeira S.R."/>
            <person name="Urmenyi T."/>
            <person name="Vettore A."/>
            <person name="Wassem R."/>
            <person name="Zaha A."/>
            <person name="Simpson A.J.G."/>
        </authorList>
    </citation>
    <scope>NUCLEOTIDE SEQUENCE [LARGE SCALE GENOMIC DNA]</scope>
    <source>
        <strain>ATCC 12472 / DSM 30191 / JCM 1249 / CCUG 213 / NBRC 12614 / NCIMB 9131 / NCTC 9757 / MK</strain>
    </source>
</reference>
<keyword id="KW-1003">Cell membrane</keyword>
<keyword id="KW-0210">Decarboxylase</keyword>
<keyword id="KW-0444">Lipid biosynthesis</keyword>
<keyword id="KW-0443">Lipid metabolism</keyword>
<keyword id="KW-0456">Lyase</keyword>
<keyword id="KW-0472">Membrane</keyword>
<keyword id="KW-0594">Phospholipid biosynthesis</keyword>
<keyword id="KW-1208">Phospholipid metabolism</keyword>
<keyword id="KW-0670">Pyruvate</keyword>
<keyword id="KW-1185">Reference proteome</keyword>
<keyword id="KW-0865">Zymogen</keyword>
<accession>Q7P0H6</accession>